<comment type="function">
    <text evidence="1">Catalyzes the removal of terminal sialic acid residues from viral and cellular glycoconjugates. Cleaves off the terminal sialic acids on the glycosylated HA during virus budding to facilitate virus release. Additionally helps virus spread through the circulation by further removing sialic acids from the cell surface. These cleavages prevent self-aggregation and ensure the efficient spread of the progeny virus from cell to cell. Otherwise, infection would be limited to one round of replication. Described as a receptor-destroying enzyme because it cleaves a terminal sialic acid from the cellular receptors. May facilitate viral invasion of the upper airways by cleaving the sialic acid moieties on the mucin of the airway epithelial cells. Likely to plays a role in the budding process through its association with lipid rafts during intracellular transport. May additionally display a raft-association independent effect on budding. Plays a role in the determination of host range restriction on replication and virulence. Sialidase activity in late endosome/lysosome traffic seems to enhance virus replication.</text>
</comment>
<comment type="catalytic activity">
    <reaction evidence="1">
        <text>Hydrolysis of alpha-(2-&gt;3)-, alpha-(2-&gt;6)-, alpha-(2-&gt;8)- glycosidic linkages of terminal sialic acid residues in oligosaccharides, glycoproteins, glycolipids, colominic acid and synthetic substrates.</text>
        <dbReference type="EC" id="3.2.1.18"/>
    </reaction>
</comment>
<comment type="cofactor">
    <cofactor evidence="1">
        <name>Ca(2+)</name>
        <dbReference type="ChEBI" id="CHEBI:29108"/>
    </cofactor>
</comment>
<comment type="activity regulation">
    <text evidence="1">Inhibited by the neuraminidase inhibitors zanamivir (Relenza) and oseltamivir (Tamiflu). These drugs interfere with the release of progeny virus from infected cells and are effective against all influenza strains. Resistance to neuraminidase inhibitors is quite rare.</text>
</comment>
<comment type="subunit">
    <text evidence="1">Homotetramer.</text>
</comment>
<comment type="subcellular location">
    <subcellularLocation>
        <location evidence="1">Virion membrane</location>
    </subcellularLocation>
    <subcellularLocation>
        <location evidence="1">Host apical cell membrane</location>
        <topology evidence="1">Single-pass type II membrane protein</topology>
    </subcellularLocation>
    <text evidence="1">Preferentially accumulates at the apical plasma membrane in infected polarized epithelial cells, which is the virus assembly site. Uses lipid rafts for cell surface transport and apical sorting. In the virion, forms a mushroom-shaped spike on the surface of the membrane.</text>
</comment>
<comment type="domain">
    <text evidence="1">Intact N-terminus is essential for virion morphogenesis. Possesses two apical sorting signals, one in the ectodomain, which is likely to be a glycan, and the other in the transmembrane domain. The transmembrane domain also plays a role in lipid raft association.</text>
</comment>
<comment type="PTM">
    <text evidence="1">N-glycosylated.</text>
</comment>
<comment type="miscellaneous">
    <text>The influenza A genome consist of 8 RNA segments. Genetic variation of hemagglutinin and/or neuraminidase genes results in the emergence of new influenza strains. The mechanism of variation can be the result of point mutations or the result of genetic reassortment between segments of two different strains.</text>
</comment>
<comment type="similarity">
    <text evidence="1">Belongs to the glycosyl hydrolase 34 family.</text>
</comment>
<dbReference type="EC" id="3.2.1.18" evidence="1"/>
<dbReference type="EMBL" id="M37511">
    <property type="protein sequence ID" value="AAA43426.1"/>
    <property type="molecule type" value="Genomic_RNA"/>
</dbReference>
<dbReference type="SMR" id="P31510"/>
<dbReference type="CAZy" id="GH34">
    <property type="family name" value="Glycoside Hydrolase Family 34"/>
</dbReference>
<dbReference type="GlyCosmos" id="P31510">
    <property type="glycosylation" value="7 sites, No reported glycans"/>
</dbReference>
<dbReference type="GO" id="GO:0020002">
    <property type="term" value="C:host cell plasma membrane"/>
    <property type="evidence" value="ECO:0007669"/>
    <property type="project" value="UniProtKB-SubCell"/>
</dbReference>
<dbReference type="GO" id="GO:0016020">
    <property type="term" value="C:membrane"/>
    <property type="evidence" value="ECO:0007669"/>
    <property type="project" value="UniProtKB-UniRule"/>
</dbReference>
<dbReference type="GO" id="GO:0055036">
    <property type="term" value="C:virion membrane"/>
    <property type="evidence" value="ECO:0007669"/>
    <property type="project" value="UniProtKB-SubCell"/>
</dbReference>
<dbReference type="GO" id="GO:0004308">
    <property type="term" value="F:exo-alpha-sialidase activity"/>
    <property type="evidence" value="ECO:0007669"/>
    <property type="project" value="UniProtKB-UniRule"/>
</dbReference>
<dbReference type="GO" id="GO:0046872">
    <property type="term" value="F:metal ion binding"/>
    <property type="evidence" value="ECO:0007669"/>
    <property type="project" value="UniProtKB-UniRule"/>
</dbReference>
<dbReference type="GO" id="GO:0005975">
    <property type="term" value="P:carbohydrate metabolic process"/>
    <property type="evidence" value="ECO:0007669"/>
    <property type="project" value="InterPro"/>
</dbReference>
<dbReference type="GO" id="GO:0046761">
    <property type="term" value="P:viral budding from plasma membrane"/>
    <property type="evidence" value="ECO:0007669"/>
    <property type="project" value="UniProtKB-UniRule"/>
</dbReference>
<dbReference type="CDD" id="cd15483">
    <property type="entry name" value="Influenza_NA"/>
    <property type="match status" value="1"/>
</dbReference>
<dbReference type="Gene3D" id="2.120.10.10">
    <property type="match status" value="1"/>
</dbReference>
<dbReference type="HAMAP" id="MF_04071">
    <property type="entry name" value="INFV_NRAM"/>
    <property type="match status" value="1"/>
</dbReference>
<dbReference type="InterPro" id="IPR001860">
    <property type="entry name" value="Glyco_hydro_34"/>
</dbReference>
<dbReference type="InterPro" id="IPR033654">
    <property type="entry name" value="Sialidase_Influenza_A/B"/>
</dbReference>
<dbReference type="InterPro" id="IPR036278">
    <property type="entry name" value="Sialidase_sf"/>
</dbReference>
<dbReference type="Pfam" id="PF00064">
    <property type="entry name" value="Neur"/>
    <property type="match status" value="1"/>
</dbReference>
<dbReference type="SUPFAM" id="SSF50939">
    <property type="entry name" value="Sialidases"/>
    <property type="match status" value="1"/>
</dbReference>
<feature type="chain" id="PRO_0000078715" description="Neuraminidase">
    <location>
        <begin position="1"/>
        <end position="470"/>
    </location>
</feature>
<feature type="topological domain" description="Intravirion" evidence="1">
    <location>
        <begin position="1"/>
        <end position="6"/>
    </location>
</feature>
<feature type="transmembrane region" description="Helical" evidence="1">
    <location>
        <begin position="7"/>
        <end position="27"/>
    </location>
</feature>
<feature type="topological domain" description="Virion surface" evidence="1">
    <location>
        <begin position="28"/>
        <end position="470"/>
    </location>
</feature>
<feature type="region of interest" description="Involved in apical transport and lipid raft association" evidence="1">
    <location>
        <begin position="11"/>
        <end position="33"/>
    </location>
</feature>
<feature type="region of interest" description="Hypervariable stalk region" evidence="1">
    <location>
        <begin position="36"/>
        <end position="89"/>
    </location>
</feature>
<feature type="region of interest" description="Head of neuraminidase" evidence="1">
    <location>
        <begin position="92"/>
        <end position="470"/>
    </location>
</feature>
<feature type="active site" description="Proton donor/acceptor" evidence="1">
    <location>
        <position position="152"/>
    </location>
</feature>
<feature type="active site" description="Nucleophile" evidence="1">
    <location>
        <position position="406"/>
    </location>
</feature>
<feature type="binding site" evidence="1">
    <location>
        <position position="119"/>
    </location>
    <ligand>
        <name>substrate</name>
    </ligand>
</feature>
<feature type="binding site" evidence="1">
    <location>
        <position position="153"/>
    </location>
    <ligand>
        <name>substrate</name>
    </ligand>
</feature>
<feature type="binding site" evidence="1">
    <location>
        <begin position="278"/>
        <end position="279"/>
    </location>
    <ligand>
        <name>substrate</name>
    </ligand>
</feature>
<feature type="binding site" evidence="1">
    <location>
        <position position="294"/>
    </location>
    <ligand>
        <name>substrate</name>
    </ligand>
</feature>
<feature type="binding site" evidence="1">
    <location>
        <position position="295"/>
    </location>
    <ligand>
        <name>Ca(2+)</name>
        <dbReference type="ChEBI" id="CHEBI:29108"/>
    </ligand>
</feature>
<feature type="binding site" evidence="1">
    <location>
        <position position="299"/>
    </location>
    <ligand>
        <name>Ca(2+)</name>
        <dbReference type="ChEBI" id="CHEBI:29108"/>
    </ligand>
</feature>
<feature type="binding site" evidence="1">
    <location>
        <position position="326"/>
    </location>
    <ligand>
        <name>Ca(2+)</name>
        <dbReference type="ChEBI" id="CHEBI:29108"/>
    </ligand>
</feature>
<feature type="binding site" evidence="1">
    <location>
        <position position="348"/>
    </location>
    <ligand>
        <name>Ca(2+)</name>
        <dbReference type="ChEBI" id="CHEBI:29108"/>
    </ligand>
</feature>
<feature type="binding site" evidence="1">
    <location>
        <position position="372"/>
    </location>
    <ligand>
        <name>substrate</name>
    </ligand>
</feature>
<feature type="glycosylation site" description="N-linked (GlcNAc...) asparagine; by host" evidence="1">
    <location>
        <position position="42"/>
    </location>
</feature>
<feature type="glycosylation site" description="N-linked (GlcNAc...) asparagine; by host" evidence="1">
    <location>
        <position position="52"/>
    </location>
</feature>
<feature type="glycosylation site" description="N-linked (GlcNAc...) asparagine; by host" evidence="1">
    <location>
        <position position="63"/>
    </location>
</feature>
<feature type="glycosylation site" description="N-linked (GlcNAc...) asparagine; by host" evidence="1">
    <location>
        <position position="66"/>
    </location>
</feature>
<feature type="glycosylation site" description="N-linked (GlcNAc...) asparagine; by host" evidence="1">
    <location>
        <position position="87"/>
    </location>
</feature>
<feature type="glycosylation site" description="N-linked (GlcNAc...) asparagine; by host" evidence="1">
    <location>
        <position position="147"/>
    </location>
</feature>
<feature type="glycosylation site" description="N-linked (GlcNAc...) asparagine; by host" evidence="1">
    <location>
        <position position="202"/>
    </location>
</feature>
<feature type="disulfide bond" evidence="1">
    <location>
        <begin position="93"/>
        <end position="419"/>
    </location>
</feature>
<feature type="disulfide bond" evidence="1">
    <location>
        <begin position="125"/>
        <end position="130"/>
    </location>
</feature>
<feature type="disulfide bond" evidence="1">
    <location>
        <begin position="185"/>
        <end position="232"/>
    </location>
</feature>
<feature type="disulfide bond" evidence="1">
    <location>
        <begin position="234"/>
        <end position="239"/>
    </location>
</feature>
<feature type="disulfide bond" evidence="1">
    <location>
        <begin position="280"/>
        <end position="293"/>
    </location>
</feature>
<feature type="disulfide bond" evidence="1">
    <location>
        <begin position="282"/>
        <end position="291"/>
    </location>
</feature>
<feature type="disulfide bond" evidence="1">
    <location>
        <begin position="320"/>
        <end position="338"/>
    </location>
</feature>
<feature type="disulfide bond" evidence="1">
    <location>
        <begin position="423"/>
        <end position="449"/>
    </location>
</feature>
<sequence length="470" mass="52487">MNPNQKILFASATAIVIGTIAVLIGIVNLGLNIGLHLKPSCNCSRSQPEATNASQTIINNYYNKTNITQISNTNIQVEERASREFNNLTKGLCTINSWHIYGKDNAVRIGEDSDVLVTREPYVSCDPDECRFYALSQGTTIRGKHSNGTIHDRSQYRALISWPLSSPPTVYNSRVECIGWSSTSCHDGRARMSICISGPNNNASAVIWYNRRPVTEINTWARNILRTQESECVCHNGVCPVVFTDGSATGPAETRIYYFKEGKILKWEPLTGTAKHIEECSCYGEQARVTCTCRDNWQGSNRPVIQIDPVAMTHTSQYICSPVLTDNPRPNDPTVGKCNDPYPGNNNNGVKGFSYLDGGNTWLGRTISTASRSGYEMLKVPNALTDDRSKPTQGQTIVLNTDWSGYSGSFMDYWAEGECYRACFYVELIRGRPKEDRVWWTSNSIVSMCSSTEFLGQWNWPDGAKIEYFL</sequence>
<protein>
    <recommendedName>
        <fullName evidence="1">Neuraminidase</fullName>
        <ecNumber evidence="1">3.2.1.18</ecNumber>
    </recommendedName>
</protein>
<reference key="1">
    <citation type="submission" date="1990-08" db="EMBL/GenBank/DDBJ databases">
        <authorList>
            <person name="Air G.M."/>
            <person name="Laver W.G."/>
            <person name="Webster R.G."/>
        </authorList>
    </citation>
    <scope>NUCLEOTIDE SEQUENCE [GENOMIC RNA]</scope>
</reference>
<reference key="2">
    <citation type="journal article" date="2004" name="Virus Res.">
        <title>Assembly and budding of influenza virus.</title>
        <authorList>
            <person name="Nayak D.P."/>
            <person name="Hui E.K."/>
            <person name="Barman S."/>
        </authorList>
    </citation>
    <scope>REVIEW</scope>
</reference>
<reference key="3">
    <citation type="journal article" date="2005" name="N. Engl. J. Med.">
        <title>Neuraminidase inhibitors for influenza.</title>
        <authorList>
            <person name="Moscona A."/>
        </authorList>
    </citation>
    <scope>REVIEW</scope>
</reference>
<reference key="4">
    <citation type="journal article" date="2005" name="Biol. Pharm. Bull.">
        <title>Sialobiology of influenza: molecular mechanism of host range variation of influenza viruses.</title>
        <authorList>
            <person name="Suzuki Y."/>
        </authorList>
    </citation>
    <scope>REVIEW</scope>
</reference>
<name>NRAM_I85A8</name>
<accession>P31510</accession>
<proteinExistence type="inferred from homology"/>
<organismHost>
    <name type="scientific">Aves</name>
    <dbReference type="NCBI Taxonomy" id="8782"/>
</organismHost>
<gene>
    <name evidence="1" type="primary">NA</name>
</gene>
<evidence type="ECO:0000255" key="1">
    <source>
        <dbReference type="HAMAP-Rule" id="MF_04071"/>
    </source>
</evidence>
<organism>
    <name type="scientific">Influenza A virus (strain A/Ruddy Turnstone/New Jersey/60/1985 H4N9)</name>
    <dbReference type="NCBI Taxonomy" id="31662"/>
    <lineage>
        <taxon>Viruses</taxon>
        <taxon>Riboviria</taxon>
        <taxon>Orthornavirae</taxon>
        <taxon>Negarnaviricota</taxon>
        <taxon>Polyploviricotina</taxon>
        <taxon>Insthoviricetes</taxon>
        <taxon>Articulavirales</taxon>
        <taxon>Orthomyxoviridae</taxon>
        <taxon>Alphainfluenzavirus</taxon>
        <taxon>Alphainfluenzavirus influenzae</taxon>
        <taxon>Influenza A virus</taxon>
    </lineage>
</organism>
<keyword id="KW-0106">Calcium</keyword>
<keyword id="KW-1015">Disulfide bond</keyword>
<keyword id="KW-0325">Glycoprotein</keyword>
<keyword id="KW-0326">Glycosidase</keyword>
<keyword id="KW-1032">Host cell membrane</keyword>
<keyword id="KW-1043">Host membrane</keyword>
<keyword id="KW-0378">Hydrolase</keyword>
<keyword id="KW-0472">Membrane</keyword>
<keyword id="KW-0479">Metal-binding</keyword>
<keyword id="KW-0735">Signal-anchor</keyword>
<keyword id="KW-0812">Transmembrane</keyword>
<keyword id="KW-1133">Transmembrane helix</keyword>
<keyword id="KW-0946">Virion</keyword>